<gene>
    <name type="primary">fliR</name>
    <name type="synonym">mopE</name>
</gene>
<comment type="function">
    <text evidence="1">Role in flagellar biosynthesis.</text>
</comment>
<comment type="subcellular location">
    <subcellularLocation>
        <location evidence="3">Cell membrane</location>
        <topology evidence="3">Multi-pass membrane protein</topology>
    </subcellularLocation>
    <subcellularLocation>
        <location evidence="1">Bacterial flagellum basal body</location>
    </subcellularLocation>
</comment>
<comment type="similarity">
    <text evidence="3">Belongs to the FliR/MopE/SpaR family.</text>
</comment>
<accession>P34202</accession>
<name>FLIR_PECCC</name>
<protein>
    <recommendedName>
        <fullName>Flagellar biosynthetic protein FliR</fullName>
    </recommendedName>
    <alternativeName>
        <fullName>Flagellar biosynthetic protein MopE</fullName>
    </alternativeName>
</protein>
<sequence>MLTFNSWDMVNWVSQFFWPFVRILALISTAPVFNERAIGNRVKIGLGVLITLLVAPYLPLNTTPIFSVAGVWLLIQQILIGVTLGLSMQLAFAAIRHAGELIGLQMGLAFATFFDPTGGPNMQVVARFLNILAILLFLTFDGHLWMISLLADSFYTLPISANPIISHAFLALARAGGLIFINGLMLALPIITLLLTINLALGMLNRVAPQLSIFVVGFPITLTVGIMTLGLLLPLIPPFAEHLFSEVFDLLADILTQLSSS</sequence>
<organism>
    <name type="scientific">Pectobacterium carotovorum subsp. carotovorum</name>
    <name type="common">Erwinia carotovora subsp. carotovora</name>
    <dbReference type="NCBI Taxonomy" id="555"/>
    <lineage>
        <taxon>Bacteria</taxon>
        <taxon>Pseudomonadati</taxon>
        <taxon>Pseudomonadota</taxon>
        <taxon>Gammaproteobacteria</taxon>
        <taxon>Enterobacterales</taxon>
        <taxon>Pectobacteriaceae</taxon>
        <taxon>Pectobacterium</taxon>
    </lineage>
</organism>
<feature type="chain" id="PRO_0000192057" description="Flagellar biosynthetic protein FliR">
    <location>
        <begin position="1"/>
        <end position="261"/>
    </location>
</feature>
<feature type="transmembrane region" description="Helical" evidence="2">
    <location>
        <begin position="13"/>
        <end position="33"/>
    </location>
</feature>
<feature type="transmembrane region" description="Helical" evidence="2">
    <location>
        <begin position="44"/>
        <end position="64"/>
    </location>
</feature>
<feature type="transmembrane region" description="Helical" evidence="2">
    <location>
        <begin position="65"/>
        <end position="85"/>
    </location>
</feature>
<feature type="transmembrane region" description="Helical" evidence="2">
    <location>
        <begin position="98"/>
        <end position="118"/>
    </location>
</feature>
<feature type="transmembrane region" description="Helical" evidence="2">
    <location>
        <begin position="131"/>
        <end position="151"/>
    </location>
</feature>
<feature type="transmembrane region" description="Helical" evidence="2">
    <location>
        <begin position="153"/>
        <end position="173"/>
    </location>
</feature>
<feature type="transmembrane region" description="Helical" evidence="2">
    <location>
        <begin position="177"/>
        <end position="197"/>
    </location>
</feature>
<feature type="transmembrane region" description="Helical" evidence="2">
    <location>
        <begin position="213"/>
        <end position="233"/>
    </location>
</feature>
<feature type="transmembrane region" description="Helical" evidence="2">
    <location>
        <begin position="235"/>
        <end position="255"/>
    </location>
</feature>
<proteinExistence type="inferred from homology"/>
<keyword id="KW-0975">Bacterial flagellum</keyword>
<keyword id="KW-1003">Cell membrane</keyword>
<keyword id="KW-0472">Membrane</keyword>
<keyword id="KW-0812">Transmembrane</keyword>
<keyword id="KW-1133">Transmembrane helix</keyword>
<dbReference type="EMBL" id="X72969">
    <property type="protein sequence ID" value="CAA51478.1"/>
    <property type="molecule type" value="Genomic_DNA"/>
</dbReference>
<dbReference type="PIR" id="S42698">
    <property type="entry name" value="S42698"/>
</dbReference>
<dbReference type="SMR" id="P34202"/>
<dbReference type="GO" id="GO:0009425">
    <property type="term" value="C:bacterial-type flagellum basal body"/>
    <property type="evidence" value="ECO:0007669"/>
    <property type="project" value="UniProtKB-SubCell"/>
</dbReference>
<dbReference type="GO" id="GO:0005886">
    <property type="term" value="C:plasma membrane"/>
    <property type="evidence" value="ECO:0007669"/>
    <property type="project" value="UniProtKB-SubCell"/>
</dbReference>
<dbReference type="GO" id="GO:0044780">
    <property type="term" value="P:bacterial-type flagellum assembly"/>
    <property type="evidence" value="ECO:0007669"/>
    <property type="project" value="InterPro"/>
</dbReference>
<dbReference type="GO" id="GO:0006605">
    <property type="term" value="P:protein targeting"/>
    <property type="evidence" value="ECO:0007669"/>
    <property type="project" value="InterPro"/>
</dbReference>
<dbReference type="InterPro" id="IPR006303">
    <property type="entry name" value="FliR"/>
</dbReference>
<dbReference type="InterPro" id="IPR002010">
    <property type="entry name" value="T3SS_IM_R"/>
</dbReference>
<dbReference type="NCBIfam" id="TIGR01400">
    <property type="entry name" value="fliR"/>
    <property type="match status" value="1"/>
</dbReference>
<dbReference type="PANTHER" id="PTHR30065">
    <property type="entry name" value="FLAGELLAR BIOSYNTHETIC PROTEIN FLIR"/>
    <property type="match status" value="1"/>
</dbReference>
<dbReference type="PANTHER" id="PTHR30065:SF8">
    <property type="entry name" value="FLAGELLAR BIOSYNTHETIC PROTEIN FLIR"/>
    <property type="match status" value="1"/>
</dbReference>
<dbReference type="Pfam" id="PF01311">
    <property type="entry name" value="Bac_export_1"/>
    <property type="match status" value="1"/>
</dbReference>
<dbReference type="PRINTS" id="PR00953">
    <property type="entry name" value="TYPE3IMRPROT"/>
</dbReference>
<evidence type="ECO:0000250" key="1"/>
<evidence type="ECO:0000255" key="2"/>
<evidence type="ECO:0000305" key="3"/>
<reference key="1">
    <citation type="journal article" date="1993" name="Mol. Microbiol.">
        <title>A pleiotropic reduced virulence (Rvi-) mutant of Erwinia carotovora subspecies atroseptica is defective in flagella assembly proteins that are conserved in plant and animal bacterial pathogens.</title>
        <authorList>
            <person name="Mulholland V."/>
            <person name="Hinton J.C.D."/>
            <person name="Sidebotham J."/>
            <person name="Toth I.K."/>
            <person name="Hyman L.J."/>
            <person name="Perombelon M.C.M."/>
            <person name="Reeves P.J."/>
            <person name="Salmond G.P.C."/>
        </authorList>
    </citation>
    <scope>NUCLEOTIDE SEQUENCE [GENOMIC DNA]</scope>
    <source>
        <strain>SCRI 193</strain>
    </source>
</reference>
<reference key="2">
    <citation type="journal article" date="1993" name="Mol. Microbiol.">
        <title>A pleiotropic reduced virulence (Rvi-) mutant of Erwinia carotovora subspecies atroseptica is defective in flagella assembly proteins that are conserved in plant and animal bacterial pathogens.</title>
        <authorList>
            <person name="Mulholland V."/>
            <person name="Hinton J.C.D."/>
            <person name="Sidebotham J."/>
            <person name="Toth I.K."/>
            <person name="Hyman L.J."/>
            <person name="Perombelon M.C.M."/>
            <person name="Reeves P.J."/>
            <person name="Salmond G.P.C."/>
        </authorList>
    </citation>
    <scope>SEQUENCE REVISION</scope>
</reference>